<sequence>MSRKNQAPKREVLPDPLYNSKIVTRLINRVMLDGKRGTAATIVYYAFSAIKEATGNDALEVFETAMDNIMPVLEVRARRVGGSNYQVPVEVRPERRTTLGLRWLVNASRARGEHTMKDRLAKEIMDAANNTGASVKKREDTHKMAEANRAFAHFRW</sequence>
<proteinExistence type="inferred from homology"/>
<evidence type="ECO:0000255" key="1">
    <source>
        <dbReference type="HAMAP-Rule" id="MF_00480"/>
    </source>
</evidence>
<evidence type="ECO:0000305" key="2"/>
<reference key="1">
    <citation type="journal article" date="2006" name="Proc. Natl. Acad. Sci. U.S.A.">
        <title>Molecular genetic anatomy of inter- and intraserotype variation in the human bacterial pathogen group A Streptococcus.</title>
        <authorList>
            <person name="Beres S.B."/>
            <person name="Richter E.W."/>
            <person name="Nagiec M.J."/>
            <person name="Sumby P."/>
            <person name="Porcella S.F."/>
            <person name="DeLeo F.R."/>
            <person name="Musser J.M."/>
        </authorList>
    </citation>
    <scope>NUCLEOTIDE SEQUENCE [LARGE SCALE GENOMIC DNA]</scope>
    <source>
        <strain>MGAS2096</strain>
    </source>
</reference>
<name>RS7_STRPB</name>
<dbReference type="EMBL" id="CP000261">
    <property type="protein sequence ID" value="ABF35301.1"/>
    <property type="molecule type" value="Genomic_DNA"/>
</dbReference>
<dbReference type="SMR" id="Q1JDK7"/>
<dbReference type="KEGG" id="spj:MGAS2096_Spy0249"/>
<dbReference type="HOGENOM" id="CLU_072226_1_1_9"/>
<dbReference type="GO" id="GO:0015935">
    <property type="term" value="C:small ribosomal subunit"/>
    <property type="evidence" value="ECO:0007669"/>
    <property type="project" value="InterPro"/>
</dbReference>
<dbReference type="GO" id="GO:0019843">
    <property type="term" value="F:rRNA binding"/>
    <property type="evidence" value="ECO:0007669"/>
    <property type="project" value="UniProtKB-UniRule"/>
</dbReference>
<dbReference type="GO" id="GO:0003735">
    <property type="term" value="F:structural constituent of ribosome"/>
    <property type="evidence" value="ECO:0007669"/>
    <property type="project" value="InterPro"/>
</dbReference>
<dbReference type="GO" id="GO:0000049">
    <property type="term" value="F:tRNA binding"/>
    <property type="evidence" value="ECO:0007669"/>
    <property type="project" value="UniProtKB-UniRule"/>
</dbReference>
<dbReference type="GO" id="GO:0006412">
    <property type="term" value="P:translation"/>
    <property type="evidence" value="ECO:0007669"/>
    <property type="project" value="UniProtKB-UniRule"/>
</dbReference>
<dbReference type="CDD" id="cd14869">
    <property type="entry name" value="uS7_Bacteria"/>
    <property type="match status" value="1"/>
</dbReference>
<dbReference type="FunFam" id="1.10.455.10:FF:000001">
    <property type="entry name" value="30S ribosomal protein S7"/>
    <property type="match status" value="1"/>
</dbReference>
<dbReference type="Gene3D" id="1.10.455.10">
    <property type="entry name" value="Ribosomal protein S7 domain"/>
    <property type="match status" value="1"/>
</dbReference>
<dbReference type="HAMAP" id="MF_00480_B">
    <property type="entry name" value="Ribosomal_uS7_B"/>
    <property type="match status" value="1"/>
</dbReference>
<dbReference type="InterPro" id="IPR000235">
    <property type="entry name" value="Ribosomal_uS7"/>
</dbReference>
<dbReference type="InterPro" id="IPR005717">
    <property type="entry name" value="Ribosomal_uS7_bac/org-type"/>
</dbReference>
<dbReference type="InterPro" id="IPR020606">
    <property type="entry name" value="Ribosomal_uS7_CS"/>
</dbReference>
<dbReference type="InterPro" id="IPR023798">
    <property type="entry name" value="Ribosomal_uS7_dom"/>
</dbReference>
<dbReference type="InterPro" id="IPR036823">
    <property type="entry name" value="Ribosomal_uS7_dom_sf"/>
</dbReference>
<dbReference type="NCBIfam" id="TIGR01029">
    <property type="entry name" value="rpsG_bact"/>
    <property type="match status" value="1"/>
</dbReference>
<dbReference type="PANTHER" id="PTHR11205">
    <property type="entry name" value="RIBOSOMAL PROTEIN S7"/>
    <property type="match status" value="1"/>
</dbReference>
<dbReference type="Pfam" id="PF00177">
    <property type="entry name" value="Ribosomal_S7"/>
    <property type="match status" value="1"/>
</dbReference>
<dbReference type="PIRSF" id="PIRSF002122">
    <property type="entry name" value="RPS7p_RPS7a_RPS5e_RPS7o"/>
    <property type="match status" value="1"/>
</dbReference>
<dbReference type="SUPFAM" id="SSF47973">
    <property type="entry name" value="Ribosomal protein S7"/>
    <property type="match status" value="1"/>
</dbReference>
<dbReference type="PROSITE" id="PS00052">
    <property type="entry name" value="RIBOSOMAL_S7"/>
    <property type="match status" value="1"/>
</dbReference>
<protein>
    <recommendedName>
        <fullName evidence="1">Small ribosomal subunit protein uS7</fullName>
    </recommendedName>
    <alternativeName>
        <fullName evidence="2">30S ribosomal protein S7</fullName>
    </alternativeName>
</protein>
<feature type="chain" id="PRO_1000014299" description="Small ribosomal subunit protein uS7">
    <location>
        <begin position="1"/>
        <end position="156"/>
    </location>
</feature>
<accession>Q1JDK7</accession>
<keyword id="KW-0687">Ribonucleoprotein</keyword>
<keyword id="KW-0689">Ribosomal protein</keyword>
<keyword id="KW-0694">RNA-binding</keyword>
<keyword id="KW-0699">rRNA-binding</keyword>
<keyword id="KW-0820">tRNA-binding</keyword>
<organism>
    <name type="scientific">Streptococcus pyogenes serotype M12 (strain MGAS2096)</name>
    <dbReference type="NCBI Taxonomy" id="370553"/>
    <lineage>
        <taxon>Bacteria</taxon>
        <taxon>Bacillati</taxon>
        <taxon>Bacillota</taxon>
        <taxon>Bacilli</taxon>
        <taxon>Lactobacillales</taxon>
        <taxon>Streptococcaceae</taxon>
        <taxon>Streptococcus</taxon>
    </lineage>
</organism>
<comment type="function">
    <text evidence="1">One of the primary rRNA binding proteins, it binds directly to 16S rRNA where it nucleates assembly of the head domain of the 30S subunit. Is located at the subunit interface close to the decoding center, probably blocks exit of the E-site tRNA.</text>
</comment>
<comment type="subunit">
    <text evidence="1">Part of the 30S ribosomal subunit. Contacts proteins S9 and S11.</text>
</comment>
<comment type="similarity">
    <text evidence="1">Belongs to the universal ribosomal protein uS7 family.</text>
</comment>
<gene>
    <name evidence="1" type="primary">rpsG</name>
    <name type="ordered locus">MGAS2096_Spy0249</name>
</gene>